<organism>
    <name type="scientific">Synechocystis sp. (strain ATCC 27184 / PCC 6803 / Kazusa)</name>
    <dbReference type="NCBI Taxonomy" id="1111708"/>
    <lineage>
        <taxon>Bacteria</taxon>
        <taxon>Bacillati</taxon>
        <taxon>Cyanobacteriota</taxon>
        <taxon>Cyanophyceae</taxon>
        <taxon>Synechococcales</taxon>
        <taxon>Merismopediaceae</taxon>
        <taxon>Synechocystis</taxon>
    </lineage>
</organism>
<accession>P74503</accession>
<reference key="1">
    <citation type="journal article" date="1996" name="DNA Res.">
        <title>Sequence analysis of the genome of the unicellular cyanobacterium Synechocystis sp. strain PCC6803. II. Sequence determination of the entire genome and assignment of potential protein-coding regions.</title>
        <authorList>
            <person name="Kaneko T."/>
            <person name="Sato S."/>
            <person name="Kotani H."/>
            <person name="Tanaka A."/>
            <person name="Asamizu E."/>
            <person name="Nakamura Y."/>
            <person name="Miyajima N."/>
            <person name="Hirosawa M."/>
            <person name="Sugiura M."/>
            <person name="Sasamoto S."/>
            <person name="Kimura T."/>
            <person name="Hosouchi T."/>
            <person name="Matsuno A."/>
            <person name="Muraki A."/>
            <person name="Nakazaki N."/>
            <person name="Naruo K."/>
            <person name="Okumura S."/>
            <person name="Shimpo S."/>
            <person name="Takeuchi C."/>
            <person name="Wada T."/>
            <person name="Watanabe A."/>
            <person name="Yamada M."/>
            <person name="Yasuda M."/>
            <person name="Tabata S."/>
        </authorList>
    </citation>
    <scope>NUCLEOTIDE SEQUENCE [LARGE SCALE GENOMIC DNA]</scope>
    <source>
        <strain>ATCC 27184 / PCC 6803 / Kazusa</strain>
    </source>
</reference>
<reference key="2">
    <citation type="journal article" date="2013" name="Microbiology">
        <title>Biochemical analysis of three putative KaiC clock proteins from Synechocystis sp. PCC 6803 suggests their functional divergence.</title>
        <authorList>
            <person name="Wiegard A."/>
            <person name="Doerrich A.K."/>
            <person name="Deinzer H.T."/>
            <person name="Beck C."/>
            <person name="Wilde A."/>
            <person name="Holtzendorff J."/>
            <person name="Axmann I.M."/>
        </authorList>
    </citation>
    <scope>PROBABLE CATALYTIC ACTIVITY</scope>
    <scope>AUTOPHOSPHORYLATION ACTIVITY</scope>
    <scope>SUBUNIT</scope>
    <scope>PUTATIVE PHOSPHORYLATION AT SER-423 AND THR-424</scope>
    <source>
        <strain>ATCC 27184 / PCC 6803 / Kazusa</strain>
    </source>
</reference>
<reference key="3">
    <citation type="journal article" date="2014" name="Microbiology">
        <title>Deletion of the Synechocystis sp. PCC 6803 kaiAB1C1 gene cluster causes impaired cell growth under light-dark conditions.</title>
        <authorList>
            <person name="Doerrich A.K."/>
            <person name="Mitschke J."/>
            <person name="Siadat O."/>
            <person name="Wilde A."/>
        </authorList>
    </citation>
    <scope>DISRUPTION PHENOTYPE</scope>
    <source>
        <strain>ATCC 27184 / PCC 6803 / Kazusa</strain>
    </source>
</reference>
<reference key="4">
    <citation type="journal article" date="2020" name="J. Bacteriol.">
        <title>Synechocystis KaiC3 Displays Temperature- and KaiB-Dependent ATPase Activity and Is Important for Growth in Darkness.</title>
        <authorList>
            <person name="Wiegard A."/>
            <person name="Koebler C."/>
            <person name="Oyama K."/>
            <person name="Doerrich A.K."/>
            <person name="Azai C."/>
            <person name="Terauchi K."/>
            <person name="Wilde A."/>
            <person name="Axmann I.M."/>
        </authorList>
    </citation>
    <scope>FUNCTION</scope>
    <scope>ATPASE ACTIVITY</scope>
    <scope>ACTIVITY REGULATION</scope>
    <scope>BIOPHYSICOCHEMICAL PROPERTIES</scope>
    <scope>INTERACTION WITH ITSELF; KAIB1; KAIB3 AND KAIC1</scope>
    <scope>PHOSPHORYLATION</scope>
    <scope>DISRUPTION PHENOTYPE</scope>
    <scope>MUTAGENESIS OF 423-SER-THR-424</scope>
    <source>
        <strain>ATCC 27184 / PCC 6803 / Kazusa</strain>
    </source>
</reference>
<feature type="chain" id="PRO_0000217788" description="Circadian clock protein KaiC3">
    <location>
        <begin position="1"/>
        <end position="505"/>
    </location>
</feature>
<feature type="domain" description="KaiC 1" evidence="1">
    <location>
        <begin position="10"/>
        <end position="252"/>
    </location>
</feature>
<feature type="domain" description="KaiC 2" evidence="1">
    <location>
        <begin position="253"/>
        <end position="485"/>
    </location>
</feature>
<feature type="modified residue" description="Phosphoserine; by autocatalysis" evidence="8">
    <location>
        <position position="423"/>
    </location>
</feature>
<feature type="modified residue" description="Phosphothreonine; by autocatalysis" evidence="8">
    <location>
        <position position="424"/>
    </location>
</feature>
<feature type="mutagenesis site" description="2-fold increase in ATPase." evidence="4">
    <original>ST</original>
    <variation>AA</variation>
    <location>
        <begin position="423"/>
        <end position="424"/>
    </location>
</feature>
<feature type="mutagenesis site" description="No change in ATPase." evidence="4">
    <original>ST</original>
    <variation>DE</variation>
    <location>
        <begin position="423"/>
        <end position="424"/>
    </location>
</feature>
<dbReference type="EC" id="2.7.11.1" evidence="8"/>
<dbReference type="EC" id="3.6.4.-" evidence="4"/>
<dbReference type="EMBL" id="BA000022">
    <property type="protein sequence ID" value="BAA18607.1"/>
    <property type="molecule type" value="Genomic_DNA"/>
</dbReference>
<dbReference type="PIR" id="S76478">
    <property type="entry name" value="S76478"/>
</dbReference>
<dbReference type="SMR" id="P74503"/>
<dbReference type="IntAct" id="P74503">
    <property type="interactions" value="2"/>
</dbReference>
<dbReference type="STRING" id="1148.gene:10499490"/>
<dbReference type="iPTMnet" id="P74503"/>
<dbReference type="PaxDb" id="1148-1653695"/>
<dbReference type="EnsemblBacteria" id="BAA18607">
    <property type="protein sequence ID" value="BAA18607"/>
    <property type="gene ID" value="BAA18607"/>
</dbReference>
<dbReference type="KEGG" id="syn:slr1942"/>
<dbReference type="eggNOG" id="COG0467">
    <property type="taxonomic scope" value="Bacteria"/>
</dbReference>
<dbReference type="InParanoid" id="P74503"/>
<dbReference type="PhylomeDB" id="P74503"/>
<dbReference type="Proteomes" id="UP000001425">
    <property type="component" value="Chromosome"/>
</dbReference>
<dbReference type="GO" id="GO:0005524">
    <property type="term" value="F:ATP binding"/>
    <property type="evidence" value="ECO:0007669"/>
    <property type="project" value="InterPro"/>
</dbReference>
<dbReference type="GO" id="GO:0003677">
    <property type="term" value="F:DNA binding"/>
    <property type="evidence" value="ECO:0007669"/>
    <property type="project" value="InterPro"/>
</dbReference>
<dbReference type="GO" id="GO:0016787">
    <property type="term" value="F:hydrolase activity"/>
    <property type="evidence" value="ECO:0007669"/>
    <property type="project" value="UniProtKB-KW"/>
</dbReference>
<dbReference type="GO" id="GO:0000287">
    <property type="term" value="F:magnesium ion binding"/>
    <property type="evidence" value="ECO:0007669"/>
    <property type="project" value="InterPro"/>
</dbReference>
<dbReference type="GO" id="GO:0004674">
    <property type="term" value="F:protein serine/threonine kinase activity"/>
    <property type="evidence" value="ECO:0007669"/>
    <property type="project" value="InterPro"/>
</dbReference>
<dbReference type="GO" id="GO:0042752">
    <property type="term" value="P:regulation of circadian rhythm"/>
    <property type="evidence" value="ECO:0007669"/>
    <property type="project" value="InterPro"/>
</dbReference>
<dbReference type="GO" id="GO:0006355">
    <property type="term" value="P:regulation of DNA-templated transcription"/>
    <property type="evidence" value="ECO:0007669"/>
    <property type="project" value="InterPro"/>
</dbReference>
<dbReference type="CDD" id="cd19485">
    <property type="entry name" value="KaiC-N"/>
    <property type="match status" value="1"/>
</dbReference>
<dbReference type="CDD" id="cd19484">
    <property type="entry name" value="KaiC_C"/>
    <property type="match status" value="1"/>
</dbReference>
<dbReference type="Gene3D" id="3.40.50.300">
    <property type="entry name" value="P-loop containing nucleotide triphosphate hydrolases"/>
    <property type="match status" value="2"/>
</dbReference>
<dbReference type="InterPro" id="IPR051347">
    <property type="entry name" value="Circadian_clock_KaiC-rel"/>
</dbReference>
<dbReference type="InterPro" id="IPR013503">
    <property type="entry name" value="Circadian_KaiC_bact"/>
</dbReference>
<dbReference type="InterPro" id="IPR030665">
    <property type="entry name" value="KaiC"/>
</dbReference>
<dbReference type="InterPro" id="IPR014774">
    <property type="entry name" value="KaiC-like_dom"/>
</dbReference>
<dbReference type="InterPro" id="IPR047222">
    <property type="entry name" value="KaiC_C"/>
</dbReference>
<dbReference type="InterPro" id="IPR010624">
    <property type="entry name" value="KaiC_dom"/>
</dbReference>
<dbReference type="InterPro" id="IPR047221">
    <property type="entry name" value="KaiC_N"/>
</dbReference>
<dbReference type="InterPro" id="IPR027417">
    <property type="entry name" value="P-loop_NTPase"/>
</dbReference>
<dbReference type="NCBIfam" id="TIGR02655">
    <property type="entry name" value="circ_KaiC"/>
    <property type="match status" value="1"/>
</dbReference>
<dbReference type="NCBIfam" id="NF006799">
    <property type="entry name" value="PRK09302.1"/>
    <property type="match status" value="1"/>
</dbReference>
<dbReference type="PANTHER" id="PTHR42926">
    <property type="match status" value="1"/>
</dbReference>
<dbReference type="PANTHER" id="PTHR42926:SF1">
    <property type="entry name" value="CIRCADIAN CLOCK OSCILLATOR PROTEIN KAIC 1"/>
    <property type="match status" value="1"/>
</dbReference>
<dbReference type="Pfam" id="PF06745">
    <property type="entry name" value="ATPase"/>
    <property type="match status" value="2"/>
</dbReference>
<dbReference type="PIRSF" id="PIRSF039117">
    <property type="entry name" value="KaiC"/>
    <property type="match status" value="1"/>
</dbReference>
<dbReference type="SUPFAM" id="SSF52540">
    <property type="entry name" value="P-loop containing nucleoside triphosphate hydrolases"/>
    <property type="match status" value="2"/>
</dbReference>
<dbReference type="PROSITE" id="PS51146">
    <property type="entry name" value="KAIC"/>
    <property type="match status" value="2"/>
</dbReference>
<name>KAIC3_SYNY3</name>
<keyword id="KW-0378">Hydrolase</keyword>
<keyword id="KW-0418">Kinase</keyword>
<keyword id="KW-0597">Phosphoprotein</keyword>
<keyword id="KW-1185">Reference proteome</keyword>
<keyword id="KW-0677">Repeat</keyword>
<keyword id="KW-0808">Transferase</keyword>
<proteinExistence type="evidence at protein level"/>
<gene>
    <name evidence="5 6" type="primary">kaiC3</name>
    <name type="ordered locus">slr1942</name>
</gene>
<sequence length="505" mass="56175">MIDQETDGIEKLETGIPGFDFLSDGGLPLGRATLIAGTAGSAKTIFASQFLVEGIQRGENGVFVTFEEPPKALRKNMRGFGWDIQQWENEGKWVFVDASPQPGDRPIVSGEYDLGALIARIEHAVRKYKASRISLDSLGAIFSHLSDSAQVRSDLFRLASALRELGVTAIMTAERVEEYGEISRYGVEEFVADNVVIVRNVLADEKRRRTIEILKYRGTDHQKGEFPFTIINKKGIVIIPLSAIELEQKSSDIRITSGSEELDRMCGSGFFRDSIILVSGATGTGKTLMVTEFMDGGVANGERCLVFAFEESREQLIRNATGWGVDFKQMEKEGKLKVVCRYPETTNLENHLIMMKDIIQEFKPNRVAVDSLSALERVSTLKSFREFIIGLTSFIKQQEIGGLFTSTTPNLLGGASITDAHISTITDSIILLRYVEMYGEMRRGITVLKMRGSMHDKDIREFSIDHQGMHIGKPFRNVTGILAGTPMYTAQSEVERLSGLFDEKI</sequence>
<protein>
    <recommendedName>
        <fullName evidence="5">Circadian clock protein KaiC3</fullName>
        <ecNumber evidence="8">2.7.11.1</ecNumber>
        <ecNumber evidence="4">3.6.4.-</ecNumber>
    </recommendedName>
</protein>
<evidence type="ECO:0000255" key="1">
    <source>
        <dbReference type="PROSITE-ProRule" id="PRU00487"/>
    </source>
</evidence>
<evidence type="ECO:0000269" key="2">
    <source>
    </source>
</evidence>
<evidence type="ECO:0000269" key="3">
    <source>
    </source>
</evidence>
<evidence type="ECO:0000269" key="4">
    <source>
    </source>
</evidence>
<evidence type="ECO:0000303" key="5">
    <source>
    </source>
</evidence>
<evidence type="ECO:0000303" key="6">
    <source>
    </source>
</evidence>
<evidence type="ECO:0000305" key="7"/>
<evidence type="ECO:0000305" key="8">
    <source>
    </source>
</evidence>
<evidence type="ECO:0000305" key="9">
    <source>
    </source>
</evidence>
<comment type="function">
    <text evidence="2 4 9">Seems to be linked to dark adaption of Synechocystis cells, but is not as essential as the core oscillator KaiAB1C1 for the circadian cycle (PubMed:31767776). KaiB3 and KaiC3 may cross talk with the core oscillator (Probable) (PubMed:31767776). Autophosphorylates and dephosphorylates independently of KaiA (PubMed:23449916). Has a weak ATPase, hydrolyzes 8.5 ATP/monomer/day, has no detectable ATP synthesis activity. ATPase activity reduced 55% by KaiB3 monomer but not the KaiB3 tetramer or KaiA in vitro, reduced 35% by KaiB1 tetramer (PubMed:31767776).</text>
</comment>
<comment type="catalytic activity">
    <reaction evidence="8">
        <text>L-seryl-[protein] + ATP = O-phospho-L-seryl-[protein] + ADP + H(+)</text>
        <dbReference type="Rhea" id="RHEA:17989"/>
        <dbReference type="Rhea" id="RHEA-COMP:9863"/>
        <dbReference type="Rhea" id="RHEA-COMP:11604"/>
        <dbReference type="ChEBI" id="CHEBI:15378"/>
        <dbReference type="ChEBI" id="CHEBI:29999"/>
        <dbReference type="ChEBI" id="CHEBI:30616"/>
        <dbReference type="ChEBI" id="CHEBI:83421"/>
        <dbReference type="ChEBI" id="CHEBI:456216"/>
        <dbReference type="EC" id="2.7.11.1"/>
    </reaction>
    <physiologicalReaction direction="left-to-right" evidence="8">
        <dbReference type="Rhea" id="RHEA:17990"/>
    </physiologicalReaction>
</comment>
<comment type="catalytic activity">
    <reaction evidence="8">
        <text>L-threonyl-[protein] + ATP = O-phospho-L-threonyl-[protein] + ADP + H(+)</text>
        <dbReference type="Rhea" id="RHEA:46608"/>
        <dbReference type="Rhea" id="RHEA-COMP:11060"/>
        <dbReference type="Rhea" id="RHEA-COMP:11605"/>
        <dbReference type="ChEBI" id="CHEBI:15378"/>
        <dbReference type="ChEBI" id="CHEBI:30013"/>
        <dbReference type="ChEBI" id="CHEBI:30616"/>
        <dbReference type="ChEBI" id="CHEBI:61977"/>
        <dbReference type="ChEBI" id="CHEBI:456216"/>
        <dbReference type="EC" id="2.7.11.1"/>
    </reaction>
    <physiologicalReaction direction="left-to-right" evidence="8">
        <dbReference type="Rhea" id="RHEA:46609"/>
    </physiologicalReaction>
</comment>
<comment type="catalytic activity">
    <reaction evidence="4">
        <text>ATP + H2O = ADP + phosphate + H(+)</text>
        <dbReference type="Rhea" id="RHEA:13065"/>
        <dbReference type="ChEBI" id="CHEBI:15377"/>
        <dbReference type="ChEBI" id="CHEBI:15378"/>
        <dbReference type="ChEBI" id="CHEBI:30616"/>
        <dbReference type="ChEBI" id="CHEBI:43474"/>
        <dbReference type="ChEBI" id="CHEBI:456216"/>
    </reaction>
    <physiologicalReaction direction="left-to-right" evidence="4">
        <dbReference type="Rhea" id="RHEA:13066"/>
    </physiologicalReaction>
</comment>
<comment type="activity regulation">
    <text evidence="4">ATPase activity is influenced by KaiB1 and KaiB3 in vitro; ATPase is reduced 35% by the KaiB1 tetramer and 55% by the KaiB3 monomer but not affected by KaiA or the KaiB3 tetramer.</text>
</comment>
<comment type="biophysicochemical properties">
    <temperatureDependence>
        <text evidence="4">ATPase activity is not temperature compensated, unlike the circadian oscillator, its activity increases with increasing temperature.</text>
    </temperatureDependence>
</comment>
<comment type="subunit">
    <text evidence="2 4">Multimerizes, probably forming homohexamers, no interaction with KaiC1 or KaiC2 is seen (PubMed:23449916). In another study forms hexamers, interacts with KaiB1, KaiB3, and KaiC1 (PubMed:31767776).</text>
</comment>
<comment type="domain">
    <text evidence="7">In the homohexamer the 2 domains (called CI and CII) self-associate to each form a 'donut' layer; the compactness and local conformation of the domains varies over the cell cycle and impacts function. CII has the autokinase and autophosphatase activities, both CI and CII have (weak) ATPase activity.</text>
</comment>
<comment type="PTM">
    <text evidence="2 4">Autophosphorylates and dephosphorylates (PubMed:23449916, PubMed:31767776). Dephosphorylation of KaiC3 was higher at 25 than at 30 or 35 degrees Celsius (PubMed:31767776).</text>
</comment>
<comment type="disruption phenotype">
    <text evidence="3 4">No visible phenotype under photoautotrophic conditions in continuous light or in a light/dark regime with or without 0.2% glucose (PubMed:25139948). Growth in the dark (with glucose) is more impaired than in wild type (PubMed:31767776).</text>
</comment>
<comment type="similarity">
    <text evidence="7">Belongs to the KaiC family.</text>
</comment>